<organism>
    <name type="scientific">Schizosaccharomyces pombe (strain 972 / ATCC 24843)</name>
    <name type="common">Fission yeast</name>
    <dbReference type="NCBI Taxonomy" id="284812"/>
    <lineage>
        <taxon>Eukaryota</taxon>
        <taxon>Fungi</taxon>
        <taxon>Dikarya</taxon>
        <taxon>Ascomycota</taxon>
        <taxon>Taphrinomycotina</taxon>
        <taxon>Schizosaccharomycetes</taxon>
        <taxon>Schizosaccharomycetales</taxon>
        <taxon>Schizosaccharomycetaceae</taxon>
        <taxon>Schizosaccharomyces</taxon>
    </lineage>
</organism>
<sequence length="601" mass="65948">MTSALYSGGGKSAGSLESALDEERLEVLRWMKEREEKKHRQLALQYDPIVRDYCLVKHGDSGYRMDSSLMTSLPHSRNPPIFEAIQGEQPSDIDTLNLKKVKSGPTSPSSIDRLSSPNAKAGDILASSLFSSGSPPDTTRRNSTSNLSSVSTNSDKSRTIGSNYNMLQSTKSTASQRRMSDSSTPSTTKSKEKIFSPKALSSPTQGASSNVTPESPPEKPIPSFVLSPPPVSATNEANKLSDIQTSSPSQDIPAKHLEPLHLNRSLSSSPSSEDSDLSLSSDSDDDEKKQPSKSEKTSSMSVSIKPPKIIRKGSKEQNRIAKEKASGAPLTKSKSHNDTSTEYDSNSLRRSRSNPAFANDDTVHPNTSFVSSNINNWYGSDLEELEQDVKTAKSMKVDIGPTRWIPTANRTIRCIRRGDFQTAASSSKRNCTYFLTLDLSSESLHAAEWAVGILLRNGDTLIIVDVIECDDPSARAVKDRMESEQLETLEKITKYILKLLSKTVLEVEVNIEVIHHEKAKHLIIEMIDYIEPSLVVMGSRGRSHLKGVLLGSFSNYLVNKSSVPVMVARKKLKKNKQRLGNQSRLANNLSDAIVDEVGRTP</sequence>
<accession>P87132</accession>
<evidence type="ECO:0000256" key="1">
    <source>
        <dbReference type="SAM" id="MobiDB-lite"/>
    </source>
</evidence>
<evidence type="ECO:0000269" key="2">
    <source>
    </source>
</evidence>
<dbReference type="EMBL" id="CU329670">
    <property type="protein sequence ID" value="CAB08759.2"/>
    <property type="molecule type" value="Genomic_DNA"/>
</dbReference>
<dbReference type="PIR" id="T37738">
    <property type="entry name" value="T37738"/>
</dbReference>
<dbReference type="RefSeq" id="XP_001713054.1">
    <property type="nucleotide sequence ID" value="XM_001713002.2"/>
</dbReference>
<dbReference type="SMR" id="P87132"/>
<dbReference type="BioGRID" id="280617">
    <property type="interactions" value="4"/>
</dbReference>
<dbReference type="STRING" id="284812.P87132"/>
<dbReference type="iPTMnet" id="P87132"/>
<dbReference type="PaxDb" id="4896-SPAC167.05.1"/>
<dbReference type="EnsemblFungi" id="SPAC167.05.1">
    <property type="protein sequence ID" value="SPAC167.05.1:pep"/>
    <property type="gene ID" value="SPAC167.05"/>
</dbReference>
<dbReference type="PomBase" id="SPAC167.05"/>
<dbReference type="VEuPathDB" id="FungiDB:SPAC167.05"/>
<dbReference type="eggNOG" id="ENOG502QRPI">
    <property type="taxonomic scope" value="Eukaryota"/>
</dbReference>
<dbReference type="HOGENOM" id="CLU_483253_0_0_1"/>
<dbReference type="InParanoid" id="P87132"/>
<dbReference type="OMA" id="IEVIHHE"/>
<dbReference type="PRO" id="PR:P87132"/>
<dbReference type="Proteomes" id="UP000002485">
    <property type="component" value="Chromosome I"/>
</dbReference>
<dbReference type="GO" id="GO:0005829">
    <property type="term" value="C:cytosol"/>
    <property type="evidence" value="ECO:0007005"/>
    <property type="project" value="PomBase"/>
</dbReference>
<dbReference type="GO" id="GO:0003824">
    <property type="term" value="F:catalytic activity"/>
    <property type="evidence" value="ECO:0000255"/>
    <property type="project" value="PomBase"/>
</dbReference>
<dbReference type="CDD" id="cd23659">
    <property type="entry name" value="USP_At3g01520-like"/>
    <property type="match status" value="1"/>
</dbReference>
<dbReference type="Gene3D" id="3.40.50.620">
    <property type="entry name" value="HUPs"/>
    <property type="match status" value="1"/>
</dbReference>
<dbReference type="InterPro" id="IPR014729">
    <property type="entry name" value="Rossmann-like_a/b/a_fold"/>
</dbReference>
<dbReference type="InterPro" id="IPR006015">
    <property type="entry name" value="Universal_stress_UspA"/>
</dbReference>
<dbReference type="InterPro" id="IPR006016">
    <property type="entry name" value="UspA"/>
</dbReference>
<dbReference type="PANTHER" id="PTHR46100">
    <property type="entry name" value="IMP2'P"/>
    <property type="match status" value="1"/>
</dbReference>
<dbReference type="PANTHER" id="PTHR46100:SF4">
    <property type="entry name" value="USPA DOMAIN-CONTAINING PROTEIN"/>
    <property type="match status" value="1"/>
</dbReference>
<dbReference type="Pfam" id="PF00582">
    <property type="entry name" value="Usp"/>
    <property type="match status" value="1"/>
</dbReference>
<dbReference type="PRINTS" id="PR01438">
    <property type="entry name" value="UNVRSLSTRESS"/>
</dbReference>
<dbReference type="SUPFAM" id="SSF52402">
    <property type="entry name" value="Adenine nucleotide alpha hydrolases-like"/>
    <property type="match status" value="1"/>
</dbReference>
<keyword id="KW-0597">Phosphoprotein</keyword>
<keyword id="KW-1185">Reference proteome</keyword>
<reference key="1">
    <citation type="journal article" date="2002" name="Nature">
        <title>The genome sequence of Schizosaccharomyces pombe.</title>
        <authorList>
            <person name="Wood V."/>
            <person name="Gwilliam R."/>
            <person name="Rajandream M.A."/>
            <person name="Lyne M.H."/>
            <person name="Lyne R."/>
            <person name="Stewart A."/>
            <person name="Sgouros J.G."/>
            <person name="Peat N."/>
            <person name="Hayles J."/>
            <person name="Baker S.G."/>
            <person name="Basham D."/>
            <person name="Bowman S."/>
            <person name="Brooks K."/>
            <person name="Brown D."/>
            <person name="Brown S."/>
            <person name="Chillingworth T."/>
            <person name="Churcher C.M."/>
            <person name="Collins M."/>
            <person name="Connor R."/>
            <person name="Cronin A."/>
            <person name="Davis P."/>
            <person name="Feltwell T."/>
            <person name="Fraser A."/>
            <person name="Gentles S."/>
            <person name="Goble A."/>
            <person name="Hamlin N."/>
            <person name="Harris D.E."/>
            <person name="Hidalgo J."/>
            <person name="Hodgson G."/>
            <person name="Holroyd S."/>
            <person name="Hornsby T."/>
            <person name="Howarth S."/>
            <person name="Huckle E.J."/>
            <person name="Hunt S."/>
            <person name="Jagels K."/>
            <person name="James K.D."/>
            <person name="Jones L."/>
            <person name="Jones M."/>
            <person name="Leather S."/>
            <person name="McDonald S."/>
            <person name="McLean J."/>
            <person name="Mooney P."/>
            <person name="Moule S."/>
            <person name="Mungall K.L."/>
            <person name="Murphy L.D."/>
            <person name="Niblett D."/>
            <person name="Odell C."/>
            <person name="Oliver K."/>
            <person name="O'Neil S."/>
            <person name="Pearson D."/>
            <person name="Quail M.A."/>
            <person name="Rabbinowitsch E."/>
            <person name="Rutherford K.M."/>
            <person name="Rutter S."/>
            <person name="Saunders D."/>
            <person name="Seeger K."/>
            <person name="Sharp S."/>
            <person name="Skelton J."/>
            <person name="Simmonds M.N."/>
            <person name="Squares R."/>
            <person name="Squares S."/>
            <person name="Stevens K."/>
            <person name="Taylor K."/>
            <person name="Taylor R.G."/>
            <person name="Tivey A."/>
            <person name="Walsh S.V."/>
            <person name="Warren T."/>
            <person name="Whitehead S."/>
            <person name="Woodward J.R."/>
            <person name="Volckaert G."/>
            <person name="Aert R."/>
            <person name="Robben J."/>
            <person name="Grymonprez B."/>
            <person name="Weltjens I."/>
            <person name="Vanstreels E."/>
            <person name="Rieger M."/>
            <person name="Schaefer M."/>
            <person name="Mueller-Auer S."/>
            <person name="Gabel C."/>
            <person name="Fuchs M."/>
            <person name="Duesterhoeft A."/>
            <person name="Fritzc C."/>
            <person name="Holzer E."/>
            <person name="Moestl D."/>
            <person name="Hilbert H."/>
            <person name="Borzym K."/>
            <person name="Langer I."/>
            <person name="Beck A."/>
            <person name="Lehrach H."/>
            <person name="Reinhardt R."/>
            <person name="Pohl T.M."/>
            <person name="Eger P."/>
            <person name="Zimmermann W."/>
            <person name="Wedler H."/>
            <person name="Wambutt R."/>
            <person name="Purnelle B."/>
            <person name="Goffeau A."/>
            <person name="Cadieu E."/>
            <person name="Dreano S."/>
            <person name="Gloux S."/>
            <person name="Lelaure V."/>
            <person name="Mottier S."/>
            <person name="Galibert F."/>
            <person name="Aves S.J."/>
            <person name="Xiang Z."/>
            <person name="Hunt C."/>
            <person name="Moore K."/>
            <person name="Hurst S.M."/>
            <person name="Lucas M."/>
            <person name="Rochet M."/>
            <person name="Gaillardin C."/>
            <person name="Tallada V.A."/>
            <person name="Garzon A."/>
            <person name="Thode G."/>
            <person name="Daga R.R."/>
            <person name="Cruzado L."/>
            <person name="Jimenez J."/>
            <person name="Sanchez M."/>
            <person name="del Rey F."/>
            <person name="Benito J."/>
            <person name="Dominguez A."/>
            <person name="Revuelta J.L."/>
            <person name="Moreno S."/>
            <person name="Armstrong J."/>
            <person name="Forsburg S.L."/>
            <person name="Cerutti L."/>
            <person name="Lowe T."/>
            <person name="McCombie W.R."/>
            <person name="Paulsen I."/>
            <person name="Potashkin J."/>
            <person name="Shpakovski G.V."/>
            <person name="Ussery D."/>
            <person name="Barrell B.G."/>
            <person name="Nurse P."/>
        </authorList>
    </citation>
    <scope>NUCLEOTIDE SEQUENCE [LARGE SCALE GENOMIC DNA]</scope>
    <source>
        <strain>972 / ATCC 24843</strain>
    </source>
</reference>
<reference key="2">
    <citation type="journal article" date="2008" name="J. Proteome Res.">
        <title>Phosphoproteome analysis of fission yeast.</title>
        <authorList>
            <person name="Wilson-Grady J.T."/>
            <person name="Villen J."/>
            <person name="Gygi S.P."/>
        </authorList>
    </citation>
    <scope>PHOSPHORYLATION [LARGE SCALE ANALYSIS] AT SER-247; SER-281 AND SER-335</scope>
    <scope>IDENTIFICATION BY MASS SPECTROMETRY</scope>
</reference>
<gene>
    <name type="ORF">SPAC167.05</name>
    <name type="ORF">SPAC57A7.01</name>
</gene>
<name>YFK5_SCHPO</name>
<protein>
    <recommendedName>
        <fullName>Uncharacterized protein C167.05</fullName>
    </recommendedName>
</protein>
<feature type="chain" id="PRO_0000116744" description="Uncharacterized protein C167.05">
    <location>
        <begin position="1"/>
        <end position="601"/>
    </location>
</feature>
<feature type="region of interest" description="Disordered" evidence="1">
    <location>
        <begin position="127"/>
        <end position="364"/>
    </location>
</feature>
<feature type="compositionally biased region" description="Polar residues" evidence="1">
    <location>
        <begin position="128"/>
        <end position="137"/>
    </location>
</feature>
<feature type="compositionally biased region" description="Low complexity" evidence="1">
    <location>
        <begin position="141"/>
        <end position="154"/>
    </location>
</feature>
<feature type="compositionally biased region" description="Polar residues" evidence="1">
    <location>
        <begin position="159"/>
        <end position="177"/>
    </location>
</feature>
<feature type="compositionally biased region" description="Polar residues" evidence="1">
    <location>
        <begin position="199"/>
        <end position="213"/>
    </location>
</feature>
<feature type="compositionally biased region" description="Polar residues" evidence="1">
    <location>
        <begin position="232"/>
        <end position="250"/>
    </location>
</feature>
<feature type="compositionally biased region" description="Low complexity" evidence="1">
    <location>
        <begin position="265"/>
        <end position="281"/>
    </location>
</feature>
<feature type="compositionally biased region" description="Basic and acidic residues" evidence="1">
    <location>
        <begin position="286"/>
        <end position="296"/>
    </location>
</feature>
<feature type="compositionally biased region" description="Basic and acidic residues" evidence="1">
    <location>
        <begin position="313"/>
        <end position="325"/>
    </location>
</feature>
<feature type="compositionally biased region" description="Polar residues" evidence="1">
    <location>
        <begin position="338"/>
        <end position="356"/>
    </location>
</feature>
<feature type="modified residue" description="Phosphoserine" evidence="2">
    <location>
        <position position="247"/>
    </location>
</feature>
<feature type="modified residue" description="Phosphoserine" evidence="2">
    <location>
        <position position="281"/>
    </location>
</feature>
<feature type="modified residue" description="Phosphoserine" evidence="2">
    <location>
        <position position="335"/>
    </location>
</feature>
<proteinExistence type="evidence at protein level"/>